<keyword id="KW-0027">Amidation</keyword>
<keyword id="KW-0878">Amphibian defense peptide</keyword>
<keyword id="KW-0903">Direct protein sequencing</keyword>
<keyword id="KW-0964">Secreted</keyword>
<proteinExistence type="evidence at protein level"/>
<dbReference type="GO" id="GO:0005576">
    <property type="term" value="C:extracellular region"/>
    <property type="evidence" value="ECO:0007669"/>
    <property type="project" value="UniProtKB-SubCell"/>
</dbReference>
<dbReference type="GO" id="GO:0006952">
    <property type="term" value="P:defense response"/>
    <property type="evidence" value="ECO:0007669"/>
    <property type="project" value="UniProtKB-KW"/>
</dbReference>
<name>CDN6_RANCA</name>
<evidence type="ECO:0000269" key="1">
    <source ref="1"/>
</evidence>
<feature type="peptide" id="PRO_0000043765" description="Caeridin-6">
    <location>
        <begin position="1"/>
        <end position="15"/>
    </location>
</feature>
<feature type="modified residue" description="Isoleucine amide" evidence="1">
    <location>
        <position position="15"/>
    </location>
</feature>
<comment type="function">
    <text>Caeridins show neither neuropeptide activity nor antibiotic activity.</text>
</comment>
<comment type="subcellular location">
    <subcellularLocation>
        <location>Secreted</location>
    </subcellularLocation>
</comment>
<comment type="tissue specificity">
    <text>Expressed by the skin parotoid and/or rostral glands.</text>
</comment>
<comment type="mass spectrometry"/>
<reference key="1">
    <citation type="journal article" date="1993" name="J. Chem. Soc. Perkin Trans. I">
        <title>Peptides from Australian frogs. Structures of the caeridins from Litoria caerulea.</title>
        <authorList>
            <person name="Waugh R.J."/>
            <person name="Stone D.J.M."/>
            <person name="Bowie J.H."/>
            <person name="Wallace J.C."/>
            <person name="Tyler M.J."/>
        </authorList>
    </citation>
    <scope>PROTEIN SEQUENCE</scope>
    <scope>AMIDATION AT ILE-15</scope>
    <scope>MASS SPECTROMETRY</scope>
    <source>
        <tissue>Parotoid gland</tissue>
    </source>
</reference>
<accession>P82078</accession>
<organism>
    <name type="scientific">Ranoidea caerulea</name>
    <name type="common">Green tree frog</name>
    <name type="synonym">Litoria caerulea</name>
    <dbReference type="NCBI Taxonomy" id="30344"/>
    <lineage>
        <taxon>Eukaryota</taxon>
        <taxon>Metazoa</taxon>
        <taxon>Chordata</taxon>
        <taxon>Craniata</taxon>
        <taxon>Vertebrata</taxon>
        <taxon>Euteleostomi</taxon>
        <taxon>Amphibia</taxon>
        <taxon>Batrachia</taxon>
        <taxon>Anura</taxon>
        <taxon>Neobatrachia</taxon>
        <taxon>Hyloidea</taxon>
        <taxon>Hylidae</taxon>
        <taxon>Pelodryadinae</taxon>
        <taxon>Ranoidea</taxon>
    </lineage>
</organism>
<sequence>GLLGFVGSLLGGLGI</sequence>
<protein>
    <recommendedName>
        <fullName>Caeridin-6</fullName>
    </recommendedName>
</protein>